<dbReference type="EMBL" id="CP001146">
    <property type="protein sequence ID" value="ACI18976.1"/>
    <property type="molecule type" value="Genomic_DNA"/>
</dbReference>
<dbReference type="RefSeq" id="WP_012547608.1">
    <property type="nucleotide sequence ID" value="NC_011297.1"/>
</dbReference>
<dbReference type="SMR" id="B5YEH1"/>
<dbReference type="STRING" id="309799.DICTH_1080"/>
<dbReference type="PaxDb" id="309799-DICTH_1080"/>
<dbReference type="KEGG" id="dth:DICTH_1080"/>
<dbReference type="eggNOG" id="COG0779">
    <property type="taxonomic scope" value="Bacteria"/>
</dbReference>
<dbReference type="HOGENOM" id="CLU_070525_2_2_0"/>
<dbReference type="OrthoDB" id="9805006at2"/>
<dbReference type="Proteomes" id="UP000001733">
    <property type="component" value="Chromosome"/>
</dbReference>
<dbReference type="GO" id="GO:0005829">
    <property type="term" value="C:cytosol"/>
    <property type="evidence" value="ECO:0007669"/>
    <property type="project" value="TreeGrafter"/>
</dbReference>
<dbReference type="GO" id="GO:0000028">
    <property type="term" value="P:ribosomal small subunit assembly"/>
    <property type="evidence" value="ECO:0007669"/>
    <property type="project" value="TreeGrafter"/>
</dbReference>
<dbReference type="GO" id="GO:0006412">
    <property type="term" value="P:translation"/>
    <property type="evidence" value="ECO:0007669"/>
    <property type="project" value="TreeGrafter"/>
</dbReference>
<dbReference type="CDD" id="cd01734">
    <property type="entry name" value="YlxS_C"/>
    <property type="match status" value="1"/>
</dbReference>
<dbReference type="FunFam" id="3.30.300.70:FF:000001">
    <property type="entry name" value="Ribosome maturation factor RimP"/>
    <property type="match status" value="1"/>
</dbReference>
<dbReference type="Gene3D" id="2.30.30.180">
    <property type="entry name" value="Ribosome maturation factor RimP, C-terminal domain"/>
    <property type="match status" value="1"/>
</dbReference>
<dbReference type="Gene3D" id="3.30.300.70">
    <property type="entry name" value="RimP-like superfamily, N-terminal"/>
    <property type="match status" value="1"/>
</dbReference>
<dbReference type="HAMAP" id="MF_01077">
    <property type="entry name" value="RimP"/>
    <property type="match status" value="1"/>
</dbReference>
<dbReference type="InterPro" id="IPR003728">
    <property type="entry name" value="Ribosome_maturation_RimP"/>
</dbReference>
<dbReference type="InterPro" id="IPR028998">
    <property type="entry name" value="RimP_C"/>
</dbReference>
<dbReference type="InterPro" id="IPR036847">
    <property type="entry name" value="RimP_C_sf"/>
</dbReference>
<dbReference type="InterPro" id="IPR028989">
    <property type="entry name" value="RimP_N"/>
</dbReference>
<dbReference type="InterPro" id="IPR035956">
    <property type="entry name" value="RimP_N_sf"/>
</dbReference>
<dbReference type="PANTHER" id="PTHR33867">
    <property type="entry name" value="RIBOSOME MATURATION FACTOR RIMP"/>
    <property type="match status" value="1"/>
</dbReference>
<dbReference type="PANTHER" id="PTHR33867:SF1">
    <property type="entry name" value="RIBOSOME MATURATION FACTOR RIMP"/>
    <property type="match status" value="1"/>
</dbReference>
<dbReference type="Pfam" id="PF17384">
    <property type="entry name" value="DUF150_C"/>
    <property type="match status" value="1"/>
</dbReference>
<dbReference type="Pfam" id="PF02576">
    <property type="entry name" value="RimP_N"/>
    <property type="match status" value="1"/>
</dbReference>
<dbReference type="SUPFAM" id="SSF74942">
    <property type="entry name" value="YhbC-like, C-terminal domain"/>
    <property type="match status" value="1"/>
</dbReference>
<dbReference type="SUPFAM" id="SSF75420">
    <property type="entry name" value="YhbC-like, N-terminal domain"/>
    <property type="match status" value="1"/>
</dbReference>
<comment type="function">
    <text evidence="1">Required for maturation of 30S ribosomal subunits.</text>
</comment>
<comment type="subcellular location">
    <subcellularLocation>
        <location evidence="1">Cytoplasm</location>
    </subcellularLocation>
</comment>
<comment type="similarity">
    <text evidence="1">Belongs to the RimP family.</text>
</comment>
<accession>B5YEH1</accession>
<feature type="chain" id="PRO_0000384643" description="Ribosome maturation factor RimP">
    <location>
        <begin position="1"/>
        <end position="156"/>
    </location>
</feature>
<keyword id="KW-0963">Cytoplasm</keyword>
<keyword id="KW-0690">Ribosome biogenesis</keyword>
<reference key="1">
    <citation type="journal article" date="2014" name="Genome Announc.">
        <title>Complete Genome Sequence of the Extreme Thermophile Dictyoglomus thermophilum H-6-12.</title>
        <authorList>
            <person name="Coil D.A."/>
            <person name="Badger J.H."/>
            <person name="Forberger H.C."/>
            <person name="Riggs F."/>
            <person name="Madupu R."/>
            <person name="Fedorova N."/>
            <person name="Ward N."/>
            <person name="Robb F.T."/>
            <person name="Eisen J.A."/>
        </authorList>
    </citation>
    <scope>NUCLEOTIDE SEQUENCE [LARGE SCALE GENOMIC DNA]</scope>
    <source>
        <strain>ATCC 35947 / DSM 3960 / H-6-12</strain>
    </source>
</reference>
<protein>
    <recommendedName>
        <fullName evidence="1">Ribosome maturation factor RimP</fullName>
    </recommendedName>
</protein>
<proteinExistence type="inferred from homology"/>
<sequence length="156" mass="18389">MKNQIYMEFYKKLKEIVEPICEKYSYELVDLEYRREPHGWVLRVYIDKVGGVTVEDCAYLSEKISKELDIKDPIPHSYILEVSSPGLDRPLKRKRDFERHMGEKVNITLLEEIEGKKKFEGKIFKVDESSVTLKIDDSFVTIPLEKIKKAMLIVEF</sequence>
<evidence type="ECO:0000255" key="1">
    <source>
        <dbReference type="HAMAP-Rule" id="MF_01077"/>
    </source>
</evidence>
<name>RIMP_DICT6</name>
<organism>
    <name type="scientific">Dictyoglomus thermophilum (strain ATCC 35947 / DSM 3960 / H-6-12)</name>
    <dbReference type="NCBI Taxonomy" id="309799"/>
    <lineage>
        <taxon>Bacteria</taxon>
        <taxon>Pseudomonadati</taxon>
        <taxon>Dictyoglomota</taxon>
        <taxon>Dictyoglomia</taxon>
        <taxon>Dictyoglomales</taxon>
        <taxon>Dictyoglomaceae</taxon>
        <taxon>Dictyoglomus</taxon>
    </lineage>
</organism>
<gene>
    <name evidence="1" type="primary">rimP</name>
    <name type="ordered locus">DICTH_1080</name>
</gene>